<feature type="chain" id="PRO_0000427232" description="Uncharacterized protein MT2658">
    <location>
        <begin position="1"/>
        <end position="224"/>
    </location>
</feature>
<feature type="binding site" evidence="1">
    <location>
        <position position="57"/>
    </location>
    <ligand>
        <name>Zn(2+)</name>
        <dbReference type="ChEBI" id="CHEBI:29105"/>
        <label>1</label>
    </ligand>
</feature>
<feature type="binding site" evidence="1">
    <location>
        <position position="59"/>
    </location>
    <ligand>
        <name>Zn(2+)</name>
        <dbReference type="ChEBI" id="CHEBI:29105"/>
        <label>1</label>
    </ligand>
</feature>
<feature type="binding site" evidence="1">
    <location>
        <position position="61"/>
    </location>
    <ligand>
        <name>Zn(2+)</name>
        <dbReference type="ChEBI" id="CHEBI:29105"/>
        <label>2</label>
    </ligand>
</feature>
<feature type="binding site" evidence="1">
    <location>
        <position position="62"/>
    </location>
    <ligand>
        <name>Zn(2+)</name>
        <dbReference type="ChEBI" id="CHEBI:29105"/>
        <label>2</label>
    </ligand>
</feature>
<feature type="binding site" evidence="1">
    <location>
        <position position="138"/>
    </location>
    <ligand>
        <name>Zn(2+)</name>
        <dbReference type="ChEBI" id="CHEBI:29105"/>
        <label>1</label>
    </ligand>
</feature>
<feature type="binding site" evidence="1">
    <location>
        <position position="162"/>
    </location>
    <ligand>
        <name>Zn(2+)</name>
        <dbReference type="ChEBI" id="CHEBI:29105"/>
        <label>1</label>
    </ligand>
</feature>
<feature type="binding site" evidence="1">
    <location>
        <position position="162"/>
    </location>
    <ligand>
        <name>Zn(2+)</name>
        <dbReference type="ChEBI" id="CHEBI:29105"/>
        <label>2</label>
    </ligand>
</feature>
<feature type="binding site" evidence="1">
    <location>
        <position position="203"/>
    </location>
    <ligand>
        <name>Zn(2+)</name>
        <dbReference type="ChEBI" id="CHEBI:29105"/>
        <label>2</label>
    </ligand>
</feature>
<proteinExistence type="inferred from homology"/>
<sequence>MLITGFPAGLLACNCYVLAERPGTDAVIVDPGQGAMGTLRRILDKNRLTPAAVLLTHGHIDHIWSAQKVSDTFGCPTYVHPADRFMLTDPIYGLGPRIAQLVAGAFFREPKQVVELDRDGDKIDLGGISVNIDHTPGHTRGSVVFRVLQATNNDKDIVFTGDTLFERAIGRTDLAGGSGRDLLRSIVDKLLVLDDSTVVLPGHGNSTTIGAERRFNPFLEGLSR</sequence>
<keyword id="KW-0378">Hydrolase</keyword>
<keyword id="KW-0479">Metal-binding</keyword>
<keyword id="KW-1185">Reference proteome</keyword>
<keyword id="KW-0862">Zinc</keyword>
<protein>
    <recommendedName>
        <fullName>Uncharacterized protein MT2658</fullName>
        <ecNumber>3.-.-.-</ecNumber>
    </recommendedName>
</protein>
<name>Y2581_MYCTO</name>
<reference key="1">
    <citation type="journal article" date="2002" name="J. Bacteriol.">
        <title>Whole-genome comparison of Mycobacterium tuberculosis clinical and laboratory strains.</title>
        <authorList>
            <person name="Fleischmann R.D."/>
            <person name="Alland D."/>
            <person name="Eisen J.A."/>
            <person name="Carpenter L."/>
            <person name="White O."/>
            <person name="Peterson J.D."/>
            <person name="DeBoy R.T."/>
            <person name="Dodson R.J."/>
            <person name="Gwinn M.L."/>
            <person name="Haft D.H."/>
            <person name="Hickey E.K."/>
            <person name="Kolonay J.F."/>
            <person name="Nelson W.C."/>
            <person name="Umayam L.A."/>
            <person name="Ermolaeva M.D."/>
            <person name="Salzberg S.L."/>
            <person name="Delcher A."/>
            <person name="Utterback T.R."/>
            <person name="Weidman J.F."/>
            <person name="Khouri H.M."/>
            <person name="Gill J."/>
            <person name="Mikula A."/>
            <person name="Bishai W."/>
            <person name="Jacobs W.R. Jr."/>
            <person name="Venter J.C."/>
            <person name="Fraser C.M."/>
        </authorList>
    </citation>
    <scope>NUCLEOTIDE SEQUENCE [LARGE SCALE GENOMIC DNA]</scope>
    <source>
        <strain>CDC 1551 / Oshkosh</strain>
    </source>
</reference>
<evidence type="ECO:0000250" key="1">
    <source>
        <dbReference type="UniProtKB" id="Q16775"/>
    </source>
</evidence>
<evidence type="ECO:0000305" key="2"/>
<gene>
    <name type="ordered locus">MT2658</name>
</gene>
<organism>
    <name type="scientific">Mycobacterium tuberculosis (strain CDC 1551 / Oshkosh)</name>
    <dbReference type="NCBI Taxonomy" id="83331"/>
    <lineage>
        <taxon>Bacteria</taxon>
        <taxon>Bacillati</taxon>
        <taxon>Actinomycetota</taxon>
        <taxon>Actinomycetes</taxon>
        <taxon>Mycobacteriales</taxon>
        <taxon>Mycobacteriaceae</taxon>
        <taxon>Mycobacterium</taxon>
        <taxon>Mycobacterium tuberculosis complex</taxon>
    </lineage>
</organism>
<dbReference type="EC" id="3.-.-.-"/>
<dbReference type="EMBL" id="AE000516">
    <property type="protein sequence ID" value="AAK46971.1"/>
    <property type="status" value="ALT_INIT"/>
    <property type="molecule type" value="Genomic_DNA"/>
</dbReference>
<dbReference type="PIR" id="D70725">
    <property type="entry name" value="D70725"/>
</dbReference>
<dbReference type="RefSeq" id="WP_003413366.1">
    <property type="nucleotide sequence ID" value="NZ_KK341227.1"/>
</dbReference>
<dbReference type="SMR" id="P9WMW2"/>
<dbReference type="KEGG" id="mtc:MT2658"/>
<dbReference type="PATRIC" id="fig|83331.31.peg.2865"/>
<dbReference type="HOGENOM" id="CLU_030571_5_0_11"/>
<dbReference type="Proteomes" id="UP000001020">
    <property type="component" value="Chromosome"/>
</dbReference>
<dbReference type="GO" id="GO:0016787">
    <property type="term" value="F:hydrolase activity"/>
    <property type="evidence" value="ECO:0007669"/>
    <property type="project" value="UniProtKB-KW"/>
</dbReference>
<dbReference type="GO" id="GO:0046872">
    <property type="term" value="F:metal ion binding"/>
    <property type="evidence" value="ECO:0007669"/>
    <property type="project" value="UniProtKB-KW"/>
</dbReference>
<dbReference type="CDD" id="cd06262">
    <property type="entry name" value="metallo-hydrolase-like_MBL-fold"/>
    <property type="match status" value="1"/>
</dbReference>
<dbReference type="Gene3D" id="3.60.15.10">
    <property type="entry name" value="Ribonuclease Z/Hydroxyacylglutathione hydrolase-like"/>
    <property type="match status" value="1"/>
</dbReference>
<dbReference type="InterPro" id="IPR051453">
    <property type="entry name" value="MBL_Glyoxalase_II"/>
</dbReference>
<dbReference type="InterPro" id="IPR001279">
    <property type="entry name" value="Metallo-B-lactamas"/>
</dbReference>
<dbReference type="InterPro" id="IPR036866">
    <property type="entry name" value="RibonucZ/Hydroxyglut_hydro"/>
</dbReference>
<dbReference type="PANTHER" id="PTHR46233">
    <property type="entry name" value="HYDROXYACYLGLUTATHIONE HYDROLASE GLOC"/>
    <property type="match status" value="1"/>
</dbReference>
<dbReference type="PANTHER" id="PTHR46233:SF3">
    <property type="entry name" value="HYDROXYACYLGLUTATHIONE HYDROLASE GLOC"/>
    <property type="match status" value="1"/>
</dbReference>
<dbReference type="Pfam" id="PF00753">
    <property type="entry name" value="Lactamase_B"/>
    <property type="match status" value="1"/>
</dbReference>
<dbReference type="SMART" id="SM00849">
    <property type="entry name" value="Lactamase_B"/>
    <property type="match status" value="1"/>
</dbReference>
<dbReference type="SUPFAM" id="SSF56281">
    <property type="entry name" value="Metallo-hydrolase/oxidoreductase"/>
    <property type="match status" value="1"/>
</dbReference>
<comment type="cofactor">
    <cofactor evidence="1">
        <name>Zn(2+)</name>
        <dbReference type="ChEBI" id="CHEBI:29105"/>
    </cofactor>
    <text evidence="1">Binds 2 Zn(2+) ions per subunit.</text>
</comment>
<comment type="similarity">
    <text evidence="2">Belongs to the metallo-beta-lactamase superfamily. Glyoxalase II family.</text>
</comment>
<comment type="sequence caution" evidence="2">
    <conflict type="erroneous initiation">
        <sequence resource="EMBL-CDS" id="AAK46971"/>
    </conflict>
    <text>Extended N-terminus.</text>
</comment>
<accession>P9WMW2</accession>
<accession>L0TCZ9</accession>
<accession>P64261</accession>
<accession>Q50640</accession>